<feature type="chain" id="PRO_0000369260" description="Actin maturation protease">
    <location>
        <begin position="1"/>
        <end position="267"/>
    </location>
</feature>
<feature type="region of interest" description="Disordered" evidence="3">
    <location>
        <begin position="1"/>
        <end position="32"/>
    </location>
</feature>
<feature type="region of interest" description="Peptidase C39-like" evidence="2">
    <location>
        <begin position="74"/>
        <end position="188"/>
    </location>
</feature>
<feature type="compositionally biased region" description="Pro residues" evidence="3">
    <location>
        <begin position="8"/>
        <end position="17"/>
    </location>
</feature>
<feature type="active site" evidence="2">
    <location>
        <position position="82"/>
    </location>
</feature>
<comment type="function">
    <text evidence="2">Actin maturation protease that specifically mediates the cleavage of immature acetylated N-terminal actin, thereby contributing to actin maturation.</text>
</comment>
<comment type="catalytic activity">
    <molecule>Actin maturation protease</molecule>
    <reaction evidence="1">
        <text>N-terminal N(alpha)-acetyl-L-cysteinyl-L-aspartyl-[protein] + H2O = N-terminal L-aspartyl-[protein] + N-acetyl-L-cysteine</text>
        <dbReference type="Rhea" id="RHEA:74579"/>
        <dbReference type="Rhea" id="RHEA-COMP:12669"/>
        <dbReference type="Rhea" id="RHEA-COMP:18395"/>
        <dbReference type="ChEBI" id="CHEBI:15377"/>
        <dbReference type="ChEBI" id="CHEBI:64720"/>
        <dbReference type="ChEBI" id="CHEBI:78236"/>
        <dbReference type="ChEBI" id="CHEBI:193599"/>
    </reaction>
    <physiologicalReaction direction="left-to-right" evidence="1">
        <dbReference type="Rhea" id="RHEA:74580"/>
    </physiologicalReaction>
</comment>
<comment type="similarity">
    <text evidence="4">Belongs to the ACTMAP family.</text>
</comment>
<accession>Q9VCE8</accession>
<keyword id="KW-0031">Aminopeptidase</keyword>
<keyword id="KW-0378">Hydrolase</keyword>
<keyword id="KW-0645">Protease</keyword>
<keyword id="KW-1185">Reference proteome</keyword>
<protein>
    <recommendedName>
        <fullName evidence="2">Actin maturation protease</fullName>
        <ecNumber evidence="2">3.4.11.-</ecNumber>
    </recommendedName>
    <alternativeName>
        <fullName evidence="2">Actin aminopeptidase ACTMAP</fullName>
    </alternativeName>
</protein>
<name>ACTMP_DROME</name>
<dbReference type="EC" id="3.4.11.-" evidence="2"/>
<dbReference type="EMBL" id="AE014297">
    <property type="protein sequence ID" value="AAF56219.2"/>
    <property type="molecule type" value="Genomic_DNA"/>
</dbReference>
<dbReference type="RefSeq" id="NP_788728.1">
    <property type="nucleotide sequence ID" value="NM_176551.3"/>
</dbReference>
<dbReference type="BioGRID" id="77507">
    <property type="interactions" value="1"/>
</dbReference>
<dbReference type="FunCoup" id="Q9VCE8">
    <property type="interactions" value="22"/>
</dbReference>
<dbReference type="STRING" id="7227.FBpp0083892"/>
<dbReference type="GlyGen" id="Q9VCE8">
    <property type="glycosylation" value="1 site"/>
</dbReference>
<dbReference type="PaxDb" id="7227-FBpp0083892"/>
<dbReference type="DNASU" id="326257"/>
<dbReference type="EnsemblMetazoa" id="FBtr0084504">
    <property type="protein sequence ID" value="FBpp0083892"/>
    <property type="gene ID" value="FBgn0053108"/>
</dbReference>
<dbReference type="GeneID" id="326257"/>
<dbReference type="KEGG" id="dme:Dmel_CG33108"/>
<dbReference type="UCSC" id="CG33108-RA">
    <property type="organism name" value="d. melanogaster"/>
</dbReference>
<dbReference type="AGR" id="FB:FBgn0053108"/>
<dbReference type="FlyBase" id="FBgn0053108">
    <property type="gene designation" value="CG33108"/>
</dbReference>
<dbReference type="VEuPathDB" id="VectorBase:FBgn0053108"/>
<dbReference type="eggNOG" id="KOG3460">
    <property type="taxonomic scope" value="Eukaryota"/>
</dbReference>
<dbReference type="GeneTree" id="ENSGT00390000012368"/>
<dbReference type="HOGENOM" id="CLU_077492_1_0_1"/>
<dbReference type="InParanoid" id="Q9VCE8"/>
<dbReference type="OMA" id="QLWDYEQ"/>
<dbReference type="OrthoDB" id="198816at2759"/>
<dbReference type="PhylomeDB" id="Q9VCE8"/>
<dbReference type="BioGRID-ORCS" id="326257">
    <property type="hits" value="0 hits in 1 CRISPR screen"/>
</dbReference>
<dbReference type="GenomeRNAi" id="326257"/>
<dbReference type="PRO" id="PR:Q9VCE8"/>
<dbReference type="Proteomes" id="UP000000803">
    <property type="component" value="Chromosome 3R"/>
</dbReference>
<dbReference type="Bgee" id="FBgn0053108">
    <property type="expression patterns" value="Expressed in T neuron T4a (Drosophila) in embryonic/larval optic lobe (Drosophila) and 38 other cell types or tissues"/>
</dbReference>
<dbReference type="ExpressionAtlas" id="Q9VCE8">
    <property type="expression patterns" value="baseline and differential"/>
</dbReference>
<dbReference type="GO" id="GO:0070005">
    <property type="term" value="F:cysteine-type aminopeptidase activity"/>
    <property type="evidence" value="ECO:0000250"/>
    <property type="project" value="FlyBase"/>
</dbReference>
<dbReference type="GO" id="GO:0004239">
    <property type="term" value="F:initiator methionyl aminopeptidase activity"/>
    <property type="evidence" value="ECO:0000250"/>
    <property type="project" value="UniProtKB"/>
</dbReference>
<dbReference type="GO" id="GO:0016485">
    <property type="term" value="P:protein processing"/>
    <property type="evidence" value="ECO:0000250"/>
    <property type="project" value="FlyBase"/>
</dbReference>
<dbReference type="InterPro" id="IPR040043">
    <property type="entry name" value="ACTMAP"/>
</dbReference>
<dbReference type="PANTHER" id="PTHR28631:SF1">
    <property type="entry name" value="ACTIN MATURATION PROTEASE"/>
    <property type="match status" value="1"/>
</dbReference>
<dbReference type="PANTHER" id="PTHR28631">
    <property type="entry name" value="UPF0692 PROTEIN C19ORF54"/>
    <property type="match status" value="1"/>
</dbReference>
<dbReference type="Pfam" id="PF21646">
    <property type="entry name" value="ACTMAP-like_C"/>
    <property type="match status" value="1"/>
</dbReference>
<evidence type="ECO:0000250" key="1">
    <source>
        <dbReference type="UniProtKB" id="J3QPC3"/>
    </source>
</evidence>
<evidence type="ECO:0000250" key="2">
    <source>
        <dbReference type="UniProtKB" id="Q5BKX5"/>
    </source>
</evidence>
<evidence type="ECO:0000256" key="3">
    <source>
        <dbReference type="SAM" id="MobiDB-lite"/>
    </source>
</evidence>
<evidence type="ECO:0000305" key="4"/>
<sequence>MSNISSVAPPPPPPPMIVTPSTPATTKERPVGDNITTDECTWACEYPEVQKGCYLSRVCQYTPPKHCQYYSVNSIVQVGPTCGLVALSMLLGGSPTADDLLKDAIDQEYTLNGELFSAQYLFELTRKHMPGPAACQLHVGPLDCKKVKELLKAGGCLLVPYDADVNHAPCVKNGHRAHWALIVGYLVDTQDRFYVLARHGKSRNLAVWPLDTLSQSNENLKEFAQPKGYPDDEFLLPPGGIGGSLGLNERCILVNGLPKQVIHVRWS</sequence>
<gene>
    <name type="ORF">CG33108</name>
</gene>
<reference key="1">
    <citation type="journal article" date="2000" name="Science">
        <title>The genome sequence of Drosophila melanogaster.</title>
        <authorList>
            <person name="Adams M.D."/>
            <person name="Celniker S.E."/>
            <person name="Holt R.A."/>
            <person name="Evans C.A."/>
            <person name="Gocayne J.D."/>
            <person name="Amanatides P.G."/>
            <person name="Scherer S.E."/>
            <person name="Li P.W."/>
            <person name="Hoskins R.A."/>
            <person name="Galle R.F."/>
            <person name="George R.A."/>
            <person name="Lewis S.E."/>
            <person name="Richards S."/>
            <person name="Ashburner M."/>
            <person name="Henderson S.N."/>
            <person name="Sutton G.G."/>
            <person name="Wortman J.R."/>
            <person name="Yandell M.D."/>
            <person name="Zhang Q."/>
            <person name="Chen L.X."/>
            <person name="Brandon R.C."/>
            <person name="Rogers Y.-H.C."/>
            <person name="Blazej R.G."/>
            <person name="Champe M."/>
            <person name="Pfeiffer B.D."/>
            <person name="Wan K.H."/>
            <person name="Doyle C."/>
            <person name="Baxter E.G."/>
            <person name="Helt G."/>
            <person name="Nelson C.R."/>
            <person name="Miklos G.L.G."/>
            <person name="Abril J.F."/>
            <person name="Agbayani A."/>
            <person name="An H.-J."/>
            <person name="Andrews-Pfannkoch C."/>
            <person name="Baldwin D."/>
            <person name="Ballew R.M."/>
            <person name="Basu A."/>
            <person name="Baxendale J."/>
            <person name="Bayraktaroglu L."/>
            <person name="Beasley E.M."/>
            <person name="Beeson K.Y."/>
            <person name="Benos P.V."/>
            <person name="Berman B.P."/>
            <person name="Bhandari D."/>
            <person name="Bolshakov S."/>
            <person name="Borkova D."/>
            <person name="Botchan M.R."/>
            <person name="Bouck J."/>
            <person name="Brokstein P."/>
            <person name="Brottier P."/>
            <person name="Burtis K.C."/>
            <person name="Busam D.A."/>
            <person name="Butler H."/>
            <person name="Cadieu E."/>
            <person name="Center A."/>
            <person name="Chandra I."/>
            <person name="Cherry J.M."/>
            <person name="Cawley S."/>
            <person name="Dahlke C."/>
            <person name="Davenport L.B."/>
            <person name="Davies P."/>
            <person name="de Pablos B."/>
            <person name="Delcher A."/>
            <person name="Deng Z."/>
            <person name="Mays A.D."/>
            <person name="Dew I."/>
            <person name="Dietz S.M."/>
            <person name="Dodson K."/>
            <person name="Doup L.E."/>
            <person name="Downes M."/>
            <person name="Dugan-Rocha S."/>
            <person name="Dunkov B.C."/>
            <person name="Dunn P."/>
            <person name="Durbin K.J."/>
            <person name="Evangelista C.C."/>
            <person name="Ferraz C."/>
            <person name="Ferriera S."/>
            <person name="Fleischmann W."/>
            <person name="Fosler C."/>
            <person name="Gabrielian A.E."/>
            <person name="Garg N.S."/>
            <person name="Gelbart W.M."/>
            <person name="Glasser K."/>
            <person name="Glodek A."/>
            <person name="Gong F."/>
            <person name="Gorrell J.H."/>
            <person name="Gu Z."/>
            <person name="Guan P."/>
            <person name="Harris M."/>
            <person name="Harris N.L."/>
            <person name="Harvey D.A."/>
            <person name="Heiman T.J."/>
            <person name="Hernandez J.R."/>
            <person name="Houck J."/>
            <person name="Hostin D."/>
            <person name="Houston K.A."/>
            <person name="Howland T.J."/>
            <person name="Wei M.-H."/>
            <person name="Ibegwam C."/>
            <person name="Jalali M."/>
            <person name="Kalush F."/>
            <person name="Karpen G.H."/>
            <person name="Ke Z."/>
            <person name="Kennison J.A."/>
            <person name="Ketchum K.A."/>
            <person name="Kimmel B.E."/>
            <person name="Kodira C.D."/>
            <person name="Kraft C.L."/>
            <person name="Kravitz S."/>
            <person name="Kulp D."/>
            <person name="Lai Z."/>
            <person name="Lasko P."/>
            <person name="Lei Y."/>
            <person name="Levitsky A.A."/>
            <person name="Li J.H."/>
            <person name="Li Z."/>
            <person name="Liang Y."/>
            <person name="Lin X."/>
            <person name="Liu X."/>
            <person name="Mattei B."/>
            <person name="McIntosh T.C."/>
            <person name="McLeod M.P."/>
            <person name="McPherson D."/>
            <person name="Merkulov G."/>
            <person name="Milshina N.V."/>
            <person name="Mobarry C."/>
            <person name="Morris J."/>
            <person name="Moshrefi A."/>
            <person name="Mount S.M."/>
            <person name="Moy M."/>
            <person name="Murphy B."/>
            <person name="Murphy L."/>
            <person name="Muzny D.M."/>
            <person name="Nelson D.L."/>
            <person name="Nelson D.R."/>
            <person name="Nelson K.A."/>
            <person name="Nixon K."/>
            <person name="Nusskern D.R."/>
            <person name="Pacleb J.M."/>
            <person name="Palazzolo M."/>
            <person name="Pittman G.S."/>
            <person name="Pan S."/>
            <person name="Pollard J."/>
            <person name="Puri V."/>
            <person name="Reese M.G."/>
            <person name="Reinert K."/>
            <person name="Remington K."/>
            <person name="Saunders R.D.C."/>
            <person name="Scheeler F."/>
            <person name="Shen H."/>
            <person name="Shue B.C."/>
            <person name="Siden-Kiamos I."/>
            <person name="Simpson M."/>
            <person name="Skupski M.P."/>
            <person name="Smith T.J."/>
            <person name="Spier E."/>
            <person name="Spradling A.C."/>
            <person name="Stapleton M."/>
            <person name="Strong R."/>
            <person name="Sun E."/>
            <person name="Svirskas R."/>
            <person name="Tector C."/>
            <person name="Turner R."/>
            <person name="Venter E."/>
            <person name="Wang A.H."/>
            <person name="Wang X."/>
            <person name="Wang Z.-Y."/>
            <person name="Wassarman D.A."/>
            <person name="Weinstock G.M."/>
            <person name="Weissenbach J."/>
            <person name="Williams S.M."/>
            <person name="Woodage T."/>
            <person name="Worley K.C."/>
            <person name="Wu D."/>
            <person name="Yang S."/>
            <person name="Yao Q.A."/>
            <person name="Ye J."/>
            <person name="Yeh R.-F."/>
            <person name="Zaveri J.S."/>
            <person name="Zhan M."/>
            <person name="Zhang G."/>
            <person name="Zhao Q."/>
            <person name="Zheng L."/>
            <person name="Zheng X.H."/>
            <person name="Zhong F.N."/>
            <person name="Zhong W."/>
            <person name="Zhou X."/>
            <person name="Zhu S.C."/>
            <person name="Zhu X."/>
            <person name="Smith H.O."/>
            <person name="Gibbs R.A."/>
            <person name="Myers E.W."/>
            <person name="Rubin G.M."/>
            <person name="Venter J.C."/>
        </authorList>
    </citation>
    <scope>NUCLEOTIDE SEQUENCE [LARGE SCALE GENOMIC DNA]</scope>
    <source>
        <strain>Berkeley</strain>
    </source>
</reference>
<reference key="2">
    <citation type="journal article" date="2002" name="Genome Biol.">
        <title>Annotation of the Drosophila melanogaster euchromatic genome: a systematic review.</title>
        <authorList>
            <person name="Misra S."/>
            <person name="Crosby M.A."/>
            <person name="Mungall C.J."/>
            <person name="Matthews B.B."/>
            <person name="Campbell K.S."/>
            <person name="Hradecky P."/>
            <person name="Huang Y."/>
            <person name="Kaminker J.S."/>
            <person name="Millburn G.H."/>
            <person name="Prochnik S.E."/>
            <person name="Smith C.D."/>
            <person name="Tupy J.L."/>
            <person name="Whitfield E.J."/>
            <person name="Bayraktaroglu L."/>
            <person name="Berman B.P."/>
            <person name="Bettencourt B.R."/>
            <person name="Celniker S.E."/>
            <person name="de Grey A.D.N.J."/>
            <person name="Drysdale R.A."/>
            <person name="Harris N.L."/>
            <person name="Richter J."/>
            <person name="Russo S."/>
            <person name="Schroeder A.J."/>
            <person name="Shu S.Q."/>
            <person name="Stapleton M."/>
            <person name="Yamada C."/>
            <person name="Ashburner M."/>
            <person name="Gelbart W.M."/>
            <person name="Rubin G.M."/>
            <person name="Lewis S.E."/>
        </authorList>
    </citation>
    <scope>GENOME REANNOTATION</scope>
    <source>
        <strain>Berkeley</strain>
    </source>
</reference>
<organism>
    <name type="scientific">Drosophila melanogaster</name>
    <name type="common">Fruit fly</name>
    <dbReference type="NCBI Taxonomy" id="7227"/>
    <lineage>
        <taxon>Eukaryota</taxon>
        <taxon>Metazoa</taxon>
        <taxon>Ecdysozoa</taxon>
        <taxon>Arthropoda</taxon>
        <taxon>Hexapoda</taxon>
        <taxon>Insecta</taxon>
        <taxon>Pterygota</taxon>
        <taxon>Neoptera</taxon>
        <taxon>Endopterygota</taxon>
        <taxon>Diptera</taxon>
        <taxon>Brachycera</taxon>
        <taxon>Muscomorpha</taxon>
        <taxon>Ephydroidea</taxon>
        <taxon>Drosophilidae</taxon>
        <taxon>Drosophila</taxon>
        <taxon>Sophophora</taxon>
    </lineage>
</organism>
<proteinExistence type="inferred from homology"/>